<keyword id="KW-0963">Cytoplasm</keyword>
<keyword id="KW-0489">Methyltransferase</keyword>
<keyword id="KW-0545">Nucleotide biosynthesis</keyword>
<keyword id="KW-0808">Transferase</keyword>
<dbReference type="EC" id="2.1.1.45" evidence="1"/>
<dbReference type="EMBL" id="CP000425">
    <property type="protein sequence ID" value="ABJ73129.1"/>
    <property type="molecule type" value="Genomic_DNA"/>
</dbReference>
<dbReference type="RefSeq" id="WP_011676488.1">
    <property type="nucleotide sequence ID" value="NC_008527.1"/>
</dbReference>
<dbReference type="SMR" id="Q02Y43"/>
<dbReference type="KEGG" id="llc:LACR_1631"/>
<dbReference type="HOGENOM" id="CLU_021669_0_0_9"/>
<dbReference type="UniPathway" id="UPA00575"/>
<dbReference type="Proteomes" id="UP000000240">
    <property type="component" value="Chromosome"/>
</dbReference>
<dbReference type="GO" id="GO:0005829">
    <property type="term" value="C:cytosol"/>
    <property type="evidence" value="ECO:0007669"/>
    <property type="project" value="TreeGrafter"/>
</dbReference>
<dbReference type="GO" id="GO:0004799">
    <property type="term" value="F:thymidylate synthase activity"/>
    <property type="evidence" value="ECO:0007669"/>
    <property type="project" value="UniProtKB-UniRule"/>
</dbReference>
<dbReference type="GO" id="GO:0006231">
    <property type="term" value="P:dTMP biosynthetic process"/>
    <property type="evidence" value="ECO:0007669"/>
    <property type="project" value="UniProtKB-UniRule"/>
</dbReference>
<dbReference type="GO" id="GO:0006235">
    <property type="term" value="P:dTTP biosynthetic process"/>
    <property type="evidence" value="ECO:0007669"/>
    <property type="project" value="UniProtKB-UniRule"/>
</dbReference>
<dbReference type="GO" id="GO:0032259">
    <property type="term" value="P:methylation"/>
    <property type="evidence" value="ECO:0007669"/>
    <property type="project" value="UniProtKB-KW"/>
</dbReference>
<dbReference type="CDD" id="cd00351">
    <property type="entry name" value="TS_Pyrimidine_HMase"/>
    <property type="match status" value="1"/>
</dbReference>
<dbReference type="Gene3D" id="3.30.572.10">
    <property type="entry name" value="Thymidylate synthase/dCMP hydroxymethylase domain"/>
    <property type="match status" value="1"/>
</dbReference>
<dbReference type="HAMAP" id="MF_00008">
    <property type="entry name" value="Thymidy_synth_bact"/>
    <property type="match status" value="1"/>
</dbReference>
<dbReference type="InterPro" id="IPR045097">
    <property type="entry name" value="Thymidate_synth/dCMP_Mease"/>
</dbReference>
<dbReference type="InterPro" id="IPR023451">
    <property type="entry name" value="Thymidate_synth/dCMP_Mease_dom"/>
</dbReference>
<dbReference type="InterPro" id="IPR036926">
    <property type="entry name" value="Thymidate_synth/dCMP_Mease_sf"/>
</dbReference>
<dbReference type="InterPro" id="IPR000398">
    <property type="entry name" value="Thymidylate_synthase"/>
</dbReference>
<dbReference type="InterPro" id="IPR020940">
    <property type="entry name" value="Thymidylate_synthase_AS"/>
</dbReference>
<dbReference type="NCBIfam" id="NF002495">
    <property type="entry name" value="PRK01827.1-1"/>
    <property type="match status" value="1"/>
</dbReference>
<dbReference type="PANTHER" id="PTHR11548">
    <property type="entry name" value="THYMIDYLATE SYNTHASE 1"/>
    <property type="match status" value="1"/>
</dbReference>
<dbReference type="PANTHER" id="PTHR11548:SF1">
    <property type="entry name" value="THYMIDYLATE SYNTHASE 1"/>
    <property type="match status" value="1"/>
</dbReference>
<dbReference type="Pfam" id="PF00303">
    <property type="entry name" value="Thymidylat_synt"/>
    <property type="match status" value="1"/>
</dbReference>
<dbReference type="PRINTS" id="PR00108">
    <property type="entry name" value="THYMDSNTHASE"/>
</dbReference>
<dbReference type="SUPFAM" id="SSF55831">
    <property type="entry name" value="Thymidylate synthase/dCMP hydroxymethylase"/>
    <property type="match status" value="1"/>
</dbReference>
<dbReference type="PROSITE" id="PS00091">
    <property type="entry name" value="THYMIDYLATE_SYNTHASE"/>
    <property type="match status" value="1"/>
</dbReference>
<reference key="1">
    <citation type="journal article" date="2006" name="Proc. Natl. Acad. Sci. U.S.A.">
        <title>Comparative genomics of the lactic acid bacteria.</title>
        <authorList>
            <person name="Makarova K.S."/>
            <person name="Slesarev A."/>
            <person name="Wolf Y.I."/>
            <person name="Sorokin A."/>
            <person name="Mirkin B."/>
            <person name="Koonin E.V."/>
            <person name="Pavlov A."/>
            <person name="Pavlova N."/>
            <person name="Karamychev V."/>
            <person name="Polouchine N."/>
            <person name="Shakhova V."/>
            <person name="Grigoriev I."/>
            <person name="Lou Y."/>
            <person name="Rohksar D."/>
            <person name="Lucas S."/>
            <person name="Huang K."/>
            <person name="Goodstein D.M."/>
            <person name="Hawkins T."/>
            <person name="Plengvidhya V."/>
            <person name="Welker D."/>
            <person name="Hughes J."/>
            <person name="Goh Y."/>
            <person name="Benson A."/>
            <person name="Baldwin K."/>
            <person name="Lee J.-H."/>
            <person name="Diaz-Muniz I."/>
            <person name="Dosti B."/>
            <person name="Smeianov V."/>
            <person name="Wechter W."/>
            <person name="Barabote R."/>
            <person name="Lorca G."/>
            <person name="Altermann E."/>
            <person name="Barrangou R."/>
            <person name="Ganesan B."/>
            <person name="Xie Y."/>
            <person name="Rawsthorne H."/>
            <person name="Tamir D."/>
            <person name="Parker C."/>
            <person name="Breidt F."/>
            <person name="Broadbent J.R."/>
            <person name="Hutkins R."/>
            <person name="O'Sullivan D."/>
            <person name="Steele J."/>
            <person name="Unlu G."/>
            <person name="Saier M.H. Jr."/>
            <person name="Klaenhammer T."/>
            <person name="Richardson P."/>
            <person name="Kozyavkin S."/>
            <person name="Weimer B.C."/>
            <person name="Mills D.A."/>
        </authorList>
    </citation>
    <scope>NUCLEOTIDE SEQUENCE [LARGE SCALE GENOMIC DNA]</scope>
    <source>
        <strain>SK11</strain>
    </source>
</reference>
<organism>
    <name type="scientific">Lactococcus lactis subsp. cremoris (strain SK11)</name>
    <dbReference type="NCBI Taxonomy" id="272622"/>
    <lineage>
        <taxon>Bacteria</taxon>
        <taxon>Bacillati</taxon>
        <taxon>Bacillota</taxon>
        <taxon>Bacilli</taxon>
        <taxon>Lactobacillales</taxon>
        <taxon>Streptococcaceae</taxon>
        <taxon>Lactococcus</taxon>
        <taxon>Lactococcus cremoris subsp. cremoris</taxon>
    </lineage>
</organism>
<accession>Q02Y43</accession>
<comment type="function">
    <text evidence="1">Catalyzes the reductive methylation of 2'-deoxyuridine-5'-monophosphate (dUMP) to 2'-deoxythymidine-5'-monophosphate (dTMP) while utilizing 5,10-methylenetetrahydrofolate (mTHF) as the methyl donor and reductant in the reaction, yielding dihydrofolate (DHF) as a by-product. This enzymatic reaction provides an intracellular de novo source of dTMP, an essential precursor for DNA biosynthesis.</text>
</comment>
<comment type="catalytic activity">
    <reaction evidence="1">
        <text>dUMP + (6R)-5,10-methylene-5,6,7,8-tetrahydrofolate = 7,8-dihydrofolate + dTMP</text>
        <dbReference type="Rhea" id="RHEA:12104"/>
        <dbReference type="ChEBI" id="CHEBI:15636"/>
        <dbReference type="ChEBI" id="CHEBI:57451"/>
        <dbReference type="ChEBI" id="CHEBI:63528"/>
        <dbReference type="ChEBI" id="CHEBI:246422"/>
        <dbReference type="EC" id="2.1.1.45"/>
    </reaction>
</comment>
<comment type="pathway">
    <text evidence="1">Pyrimidine metabolism; dTTP biosynthesis.</text>
</comment>
<comment type="subunit">
    <text evidence="1">Homodimer.</text>
</comment>
<comment type="subcellular location">
    <subcellularLocation>
        <location evidence="1">Cytoplasm</location>
    </subcellularLocation>
</comment>
<comment type="similarity">
    <text evidence="1">Belongs to the thymidylate synthase family. Bacterial-type ThyA subfamily.</text>
</comment>
<gene>
    <name evidence="1" type="primary">thyA</name>
    <name type="ordered locus">LACR_1631</name>
</gene>
<evidence type="ECO:0000255" key="1">
    <source>
        <dbReference type="HAMAP-Rule" id="MF_00008"/>
    </source>
</evidence>
<name>TYSY_LACLS</name>
<sequence length="279" mass="32676">MTYADQVFKQNIQNILDNGVFSENARPKYKDGQMANSKYVTGSFVTYDLQKGEFPITTLRPIPIKSAIKELMWIYQDQTSELSVLEEKYGVKYWGEWRIGDGTIGQRYGATVKKYNIIGKLLEGLAKNPWNRRNIINLWQYEDFEETEGLLPCAFQTMFDVRREKDGQIYLDATLIQRSNDMLVAHHINAMQYVALQMMIAKHFSWKVGKFFYFVNNLHIYDNQFEQANELMKRTASEKEPRLVLNVPDGTNFFDIKPEDFELVDYEPVKPQLKFDLAI</sequence>
<proteinExistence type="inferred from homology"/>
<feature type="chain" id="PRO_1000000617" description="Thymidylate synthase">
    <location>
        <begin position="1"/>
        <end position="279"/>
    </location>
</feature>
<feature type="active site" description="Nucleophile" evidence="1">
    <location>
        <position position="153"/>
    </location>
</feature>
<feature type="binding site" evidence="1">
    <location>
        <begin position="132"/>
        <end position="133"/>
    </location>
    <ligand>
        <name>dUMP</name>
        <dbReference type="ChEBI" id="CHEBI:246422"/>
        <note>ligand shared between dimeric partners</note>
    </ligand>
</feature>
<feature type="binding site" description="in other chain" evidence="1">
    <location>
        <begin position="178"/>
        <end position="181"/>
    </location>
    <ligand>
        <name>dUMP</name>
        <dbReference type="ChEBI" id="CHEBI:246422"/>
        <note>ligand shared between dimeric partners</note>
    </ligand>
</feature>
<feature type="binding site" evidence="1">
    <location>
        <position position="181"/>
    </location>
    <ligand>
        <name>(6R)-5,10-methylene-5,6,7,8-tetrahydrofolate</name>
        <dbReference type="ChEBI" id="CHEBI:15636"/>
    </ligand>
</feature>
<feature type="binding site" description="in other chain" evidence="1">
    <location>
        <position position="189"/>
    </location>
    <ligand>
        <name>dUMP</name>
        <dbReference type="ChEBI" id="CHEBI:246422"/>
        <note>ligand shared between dimeric partners</note>
    </ligand>
</feature>
<feature type="binding site" description="in other chain" evidence="1">
    <location>
        <begin position="219"/>
        <end position="221"/>
    </location>
    <ligand>
        <name>dUMP</name>
        <dbReference type="ChEBI" id="CHEBI:246422"/>
        <note>ligand shared between dimeric partners</note>
    </ligand>
</feature>
<feature type="binding site" evidence="1">
    <location>
        <position position="278"/>
    </location>
    <ligand>
        <name>(6R)-5,10-methylene-5,6,7,8-tetrahydrofolate</name>
        <dbReference type="ChEBI" id="CHEBI:15636"/>
    </ligand>
</feature>
<protein>
    <recommendedName>
        <fullName evidence="1">Thymidylate synthase</fullName>
        <shortName evidence="1">TS</shortName>
        <shortName evidence="1">TSase</shortName>
        <ecNumber evidence="1">2.1.1.45</ecNumber>
    </recommendedName>
</protein>